<sequence length="686" mass="75972">MLRTSIASSRPLLPSSVCPKAPAQWLCTSRARRVNTATRRYHALARKSNAGRRCPLTPNTATTSQFFQKAASSTSTKPPGPSDADVRSPASPSSRFSLRPESIPKTPQSPPVQGQTSPGSEVLPPDHESSTPPPPLEGPKSSRLRKLLYLFLTAGLAYAGGVWYSLRSDNFYDFFTEYIPYGEEAVLYLEERDFRNRFPHVTKQINRRVTVPKDEGAQVTIPSGSGLSWKVAEEQQEATDMTKKGRRMGTAHANEPTKDIKVAEKAKEEVKSKSAAKKEDVAANIPIQEALEPQPAKAEEKNLEAPRQPAVPAVTAIERLVQDKVDEPVVQDLVKVFNDVISVISADESASKFAGPIAKAKEELQRIGDRIVALKKDAQESAQEEIRNAHAAFDKSAAELIRRIDEVRTQDAAEFREEFESEREKIARSYQEKVNTELQRAHEVAEQRLRNELVEQAIELNRKFLSDVKTLVENEREGRLSKLAELSANVAELERLTAGWSDVVDINLKTQQLQVAVDAVRTTLENSDVPRPFVRELAAVKELASNDEVVAAAIASISPAAYQRGIPSAAQLVDRFRRVASEVRKASLLPENAGITSHAASLVLSKVMLKKQGLPTSDDVESILTRTANFLEEGNFDEAAREMNSLQGWAKLLSKDWLADVRRVLEVKQALEIIETEARLRCLQVE</sequence>
<accession>C6H203</accession>
<keyword id="KW-0175">Coiled coil</keyword>
<keyword id="KW-0472">Membrane</keyword>
<keyword id="KW-0496">Mitochondrion</keyword>
<keyword id="KW-0999">Mitochondrion inner membrane</keyword>
<keyword id="KW-1185">Reference proteome</keyword>
<keyword id="KW-0809">Transit peptide</keyword>
<keyword id="KW-0812">Transmembrane</keyword>
<keyword id="KW-1133">Transmembrane helix</keyword>
<feature type="transit peptide" description="Mitochondrion" evidence="2">
    <location>
        <begin position="1"/>
        <end position="42"/>
    </location>
</feature>
<feature type="chain" id="PRO_0000406638" description="MICOS complex subunit MIC60">
    <location>
        <begin position="43"/>
        <end position="686"/>
    </location>
</feature>
<feature type="topological domain" description="Mitochondrial matrix" evidence="2">
    <location>
        <begin position="43"/>
        <end position="146"/>
    </location>
</feature>
<feature type="transmembrane region" description="Helical" evidence="2">
    <location>
        <begin position="147"/>
        <end position="166"/>
    </location>
</feature>
<feature type="topological domain" description="Mitochondrial intermembrane" evidence="2">
    <location>
        <begin position="167"/>
        <end position="686"/>
    </location>
</feature>
<feature type="region of interest" description="Disordered" evidence="3">
    <location>
        <begin position="66"/>
        <end position="140"/>
    </location>
</feature>
<feature type="region of interest" description="Disordered" evidence="3">
    <location>
        <begin position="287"/>
        <end position="307"/>
    </location>
</feature>
<feature type="coiled-coil region" evidence="2">
    <location>
        <begin position="357"/>
        <end position="495"/>
    </location>
</feature>
<feature type="compositionally biased region" description="Polar residues" evidence="3">
    <location>
        <begin position="66"/>
        <end position="77"/>
    </location>
</feature>
<comment type="function">
    <text evidence="1">Component of the MICOS complex, a large protein complex of the mitochondrial inner membrane that plays crucial roles in the maintenance of crista junctions, inner membrane architecture, and formation of contact sites to the outer membrane. Plays a role in keeping cristae membranes connected to the inner boundary membrane. Also promotes protein import via the mitochondrial intermembrane space assembly (MIA) pathway (By similarity).</text>
</comment>
<comment type="subunit">
    <text evidence="1">Component of the mitochondrial contact site and cristae organizing system (MICOS) complex.</text>
</comment>
<comment type="subcellular location">
    <subcellularLocation>
        <location evidence="1">Mitochondrion inner membrane</location>
        <topology evidence="1">Single-pass membrane protein</topology>
    </subcellularLocation>
</comment>
<comment type="similarity">
    <text evidence="4">Belongs to the MICOS complex subunit Mic60 family.</text>
</comment>
<protein>
    <recommendedName>
        <fullName>MICOS complex subunit MIC60</fullName>
    </recommendedName>
    <alternativeName>
        <fullName>Mitofilin</fullName>
    </alternativeName>
</protein>
<evidence type="ECO:0000250" key="1"/>
<evidence type="ECO:0000255" key="2"/>
<evidence type="ECO:0000256" key="3">
    <source>
        <dbReference type="SAM" id="MobiDB-lite"/>
    </source>
</evidence>
<evidence type="ECO:0000305" key="4"/>
<reference key="1">
    <citation type="submission" date="2009-05" db="EMBL/GenBank/DDBJ databases">
        <title>The genome sequence of Ajellomyces capsulatus strain H143.</title>
        <authorList>
            <person name="Champion M."/>
            <person name="Cuomo C.A."/>
            <person name="Ma L.-J."/>
            <person name="Henn M.R."/>
            <person name="Sil A."/>
            <person name="Goldman B."/>
            <person name="Young S.K."/>
            <person name="Kodira C.D."/>
            <person name="Zeng Q."/>
            <person name="Koehrsen M."/>
            <person name="Alvarado L."/>
            <person name="Berlin A.M."/>
            <person name="Borenstein D."/>
            <person name="Chen Z."/>
            <person name="Engels R."/>
            <person name="Freedman E."/>
            <person name="Gellesch M."/>
            <person name="Goldberg J."/>
            <person name="Griggs A."/>
            <person name="Gujja S."/>
            <person name="Heiman D.I."/>
            <person name="Hepburn T.A."/>
            <person name="Howarth C."/>
            <person name="Jen D."/>
            <person name="Larson L."/>
            <person name="Lewis B."/>
            <person name="Mehta T."/>
            <person name="Park D."/>
            <person name="Pearson M."/>
            <person name="Roberts A."/>
            <person name="Saif S."/>
            <person name="Shea T.D."/>
            <person name="Shenoy N."/>
            <person name="Sisk P."/>
            <person name="Stolte C."/>
            <person name="Sykes S."/>
            <person name="Walk T."/>
            <person name="White J."/>
            <person name="Yandava C."/>
            <person name="Klein B."/>
            <person name="McEwen J.G."/>
            <person name="Puccia R."/>
            <person name="Goldman G.H."/>
            <person name="Felipe M.S."/>
            <person name="Nino-Vega G."/>
            <person name="San-Blas G."/>
            <person name="Taylor J.W."/>
            <person name="Mendoza L."/>
            <person name="Galagan J.E."/>
            <person name="Nusbaum C."/>
            <person name="Birren B.W."/>
        </authorList>
    </citation>
    <scope>NUCLEOTIDE SEQUENCE [LARGE SCALE GENOMIC DNA]</scope>
    <source>
        <strain>H143</strain>
    </source>
</reference>
<proteinExistence type="inferred from homology"/>
<gene>
    <name type="primary">MIC60</name>
    <name type="ORF">HCDG_00735</name>
</gene>
<organism>
    <name type="scientific">Ajellomyces capsulatus (strain H143)</name>
    <name type="common">Darling's disease fungus</name>
    <name type="synonym">Histoplasma capsulatum</name>
    <dbReference type="NCBI Taxonomy" id="544712"/>
    <lineage>
        <taxon>Eukaryota</taxon>
        <taxon>Fungi</taxon>
        <taxon>Dikarya</taxon>
        <taxon>Ascomycota</taxon>
        <taxon>Pezizomycotina</taxon>
        <taxon>Eurotiomycetes</taxon>
        <taxon>Eurotiomycetidae</taxon>
        <taxon>Onygenales</taxon>
        <taxon>Ajellomycetaceae</taxon>
        <taxon>Histoplasma</taxon>
    </lineage>
</organism>
<dbReference type="EMBL" id="GG692419">
    <property type="protein sequence ID" value="EER45156.1"/>
    <property type="molecule type" value="Genomic_DNA"/>
</dbReference>
<dbReference type="SMR" id="C6H203"/>
<dbReference type="STRING" id="544712.C6H203"/>
<dbReference type="VEuPathDB" id="FungiDB:HCDG_00735"/>
<dbReference type="eggNOG" id="KOG1854">
    <property type="taxonomic scope" value="Eukaryota"/>
</dbReference>
<dbReference type="HOGENOM" id="CLU_008024_1_2_1"/>
<dbReference type="OMA" id="RLDHQMQ"/>
<dbReference type="OrthoDB" id="10062at299071"/>
<dbReference type="Proteomes" id="UP000002624">
    <property type="component" value="Unassembled WGS sequence"/>
</dbReference>
<dbReference type="GO" id="GO:0061617">
    <property type="term" value="C:MICOS complex"/>
    <property type="evidence" value="ECO:0007669"/>
    <property type="project" value="TreeGrafter"/>
</dbReference>
<dbReference type="GO" id="GO:0042407">
    <property type="term" value="P:cristae formation"/>
    <property type="evidence" value="ECO:0007669"/>
    <property type="project" value="TreeGrafter"/>
</dbReference>
<dbReference type="InterPro" id="IPR019133">
    <property type="entry name" value="MIC60"/>
</dbReference>
<dbReference type="PANTHER" id="PTHR15415:SF7">
    <property type="entry name" value="MICOS COMPLEX SUBUNIT MIC60"/>
    <property type="match status" value="1"/>
</dbReference>
<dbReference type="PANTHER" id="PTHR15415">
    <property type="entry name" value="MITOFILIN"/>
    <property type="match status" value="1"/>
</dbReference>
<dbReference type="Pfam" id="PF09731">
    <property type="entry name" value="Mitofilin"/>
    <property type="match status" value="2"/>
</dbReference>
<name>MIC60_AJECH</name>